<feature type="chain" id="PRO_0000208061" description="GTPase activating protein Gyp51">
    <location>
        <begin position="1"/>
        <end position="1031"/>
    </location>
</feature>
<feature type="transmembrane region" description="Helical" evidence="2">
    <location>
        <begin position="798"/>
        <end position="818"/>
    </location>
</feature>
<feature type="domain" description="Rab-GAP TBC" evidence="3">
    <location>
        <begin position="610"/>
        <end position="806"/>
    </location>
</feature>
<feature type="region of interest" description="Disordered" evidence="4">
    <location>
        <begin position="1"/>
        <end position="229"/>
    </location>
</feature>
<feature type="region of interest" description="Disordered" evidence="4">
    <location>
        <begin position="278"/>
        <end position="317"/>
    </location>
</feature>
<feature type="region of interest" description="Disordered" evidence="4">
    <location>
        <begin position="339"/>
        <end position="371"/>
    </location>
</feature>
<feature type="region of interest" description="Disordered" evidence="4">
    <location>
        <begin position="420"/>
        <end position="459"/>
    </location>
</feature>
<feature type="region of interest" description="Disordered" evidence="4">
    <location>
        <begin position="490"/>
        <end position="520"/>
    </location>
</feature>
<feature type="compositionally biased region" description="Basic and acidic residues" evidence="4">
    <location>
        <begin position="1"/>
        <end position="32"/>
    </location>
</feature>
<feature type="compositionally biased region" description="Polar residues" evidence="4">
    <location>
        <begin position="43"/>
        <end position="59"/>
    </location>
</feature>
<feature type="compositionally biased region" description="Acidic residues" evidence="4">
    <location>
        <begin position="62"/>
        <end position="78"/>
    </location>
</feature>
<feature type="compositionally biased region" description="Polar residues" evidence="4">
    <location>
        <begin position="105"/>
        <end position="117"/>
    </location>
</feature>
<feature type="compositionally biased region" description="Basic and acidic residues" evidence="4">
    <location>
        <begin position="195"/>
        <end position="217"/>
    </location>
</feature>
<feature type="compositionally biased region" description="Acidic residues" evidence="4">
    <location>
        <begin position="219"/>
        <end position="229"/>
    </location>
</feature>
<feature type="compositionally biased region" description="Polar residues" evidence="4">
    <location>
        <begin position="278"/>
        <end position="306"/>
    </location>
</feature>
<feature type="compositionally biased region" description="Polar residues" evidence="4">
    <location>
        <begin position="420"/>
        <end position="429"/>
    </location>
</feature>
<feature type="compositionally biased region" description="Polar residues" evidence="4">
    <location>
        <begin position="436"/>
        <end position="455"/>
    </location>
</feature>
<feature type="compositionally biased region" description="Polar residues" evidence="4">
    <location>
        <begin position="493"/>
        <end position="505"/>
    </location>
</feature>
<reference key="1">
    <citation type="journal article" date="2002" name="Nature">
        <title>The genome sequence of Schizosaccharomyces pombe.</title>
        <authorList>
            <person name="Wood V."/>
            <person name="Gwilliam R."/>
            <person name="Rajandream M.A."/>
            <person name="Lyne M.H."/>
            <person name="Lyne R."/>
            <person name="Stewart A."/>
            <person name="Sgouros J.G."/>
            <person name="Peat N."/>
            <person name="Hayles J."/>
            <person name="Baker S.G."/>
            <person name="Basham D."/>
            <person name="Bowman S."/>
            <person name="Brooks K."/>
            <person name="Brown D."/>
            <person name="Brown S."/>
            <person name="Chillingworth T."/>
            <person name="Churcher C.M."/>
            <person name="Collins M."/>
            <person name="Connor R."/>
            <person name="Cronin A."/>
            <person name="Davis P."/>
            <person name="Feltwell T."/>
            <person name="Fraser A."/>
            <person name="Gentles S."/>
            <person name="Goble A."/>
            <person name="Hamlin N."/>
            <person name="Harris D.E."/>
            <person name="Hidalgo J."/>
            <person name="Hodgson G."/>
            <person name="Holroyd S."/>
            <person name="Hornsby T."/>
            <person name="Howarth S."/>
            <person name="Huckle E.J."/>
            <person name="Hunt S."/>
            <person name="Jagels K."/>
            <person name="James K.D."/>
            <person name="Jones L."/>
            <person name="Jones M."/>
            <person name="Leather S."/>
            <person name="McDonald S."/>
            <person name="McLean J."/>
            <person name="Mooney P."/>
            <person name="Moule S."/>
            <person name="Mungall K.L."/>
            <person name="Murphy L.D."/>
            <person name="Niblett D."/>
            <person name="Odell C."/>
            <person name="Oliver K."/>
            <person name="O'Neil S."/>
            <person name="Pearson D."/>
            <person name="Quail M.A."/>
            <person name="Rabbinowitsch E."/>
            <person name="Rutherford K.M."/>
            <person name="Rutter S."/>
            <person name="Saunders D."/>
            <person name="Seeger K."/>
            <person name="Sharp S."/>
            <person name="Skelton J."/>
            <person name="Simmonds M.N."/>
            <person name="Squares R."/>
            <person name="Squares S."/>
            <person name="Stevens K."/>
            <person name="Taylor K."/>
            <person name="Taylor R.G."/>
            <person name="Tivey A."/>
            <person name="Walsh S.V."/>
            <person name="Warren T."/>
            <person name="Whitehead S."/>
            <person name="Woodward J.R."/>
            <person name="Volckaert G."/>
            <person name="Aert R."/>
            <person name="Robben J."/>
            <person name="Grymonprez B."/>
            <person name="Weltjens I."/>
            <person name="Vanstreels E."/>
            <person name="Rieger M."/>
            <person name="Schaefer M."/>
            <person name="Mueller-Auer S."/>
            <person name="Gabel C."/>
            <person name="Fuchs M."/>
            <person name="Duesterhoeft A."/>
            <person name="Fritzc C."/>
            <person name="Holzer E."/>
            <person name="Moestl D."/>
            <person name="Hilbert H."/>
            <person name="Borzym K."/>
            <person name="Langer I."/>
            <person name="Beck A."/>
            <person name="Lehrach H."/>
            <person name="Reinhardt R."/>
            <person name="Pohl T.M."/>
            <person name="Eger P."/>
            <person name="Zimmermann W."/>
            <person name="Wedler H."/>
            <person name="Wambutt R."/>
            <person name="Purnelle B."/>
            <person name="Goffeau A."/>
            <person name="Cadieu E."/>
            <person name="Dreano S."/>
            <person name="Gloux S."/>
            <person name="Lelaure V."/>
            <person name="Mottier S."/>
            <person name="Galibert F."/>
            <person name="Aves S.J."/>
            <person name="Xiang Z."/>
            <person name="Hunt C."/>
            <person name="Moore K."/>
            <person name="Hurst S.M."/>
            <person name="Lucas M."/>
            <person name="Rochet M."/>
            <person name="Gaillardin C."/>
            <person name="Tallada V.A."/>
            <person name="Garzon A."/>
            <person name="Thode G."/>
            <person name="Daga R.R."/>
            <person name="Cruzado L."/>
            <person name="Jimenez J."/>
            <person name="Sanchez M."/>
            <person name="del Rey F."/>
            <person name="Benito J."/>
            <person name="Dominguez A."/>
            <person name="Revuelta J.L."/>
            <person name="Moreno S."/>
            <person name="Armstrong J."/>
            <person name="Forsburg S.L."/>
            <person name="Cerutti L."/>
            <person name="Lowe T."/>
            <person name="McCombie W.R."/>
            <person name="Paulsen I."/>
            <person name="Potashkin J."/>
            <person name="Shpakovski G.V."/>
            <person name="Ussery D."/>
            <person name="Barrell B.G."/>
            <person name="Nurse P."/>
        </authorList>
    </citation>
    <scope>NUCLEOTIDE SEQUENCE [LARGE SCALE GENOMIC DNA]</scope>
    <source>
        <strain>972 / ATCC 24843</strain>
    </source>
</reference>
<reference key="2">
    <citation type="journal article" date="2006" name="Nat. Biotechnol.">
        <title>ORFeome cloning and global analysis of protein localization in the fission yeast Schizosaccharomyces pombe.</title>
        <authorList>
            <person name="Matsuyama A."/>
            <person name="Arai R."/>
            <person name="Yashiroda Y."/>
            <person name="Shirai A."/>
            <person name="Kamata A."/>
            <person name="Sekido S."/>
            <person name="Kobayashi Y."/>
            <person name="Hashimoto A."/>
            <person name="Hamamoto M."/>
            <person name="Hiraoka Y."/>
            <person name="Horinouchi S."/>
            <person name="Yoshida M."/>
        </authorList>
    </citation>
    <scope>SUBCELLULAR LOCATION [LARGE SCALE ANALYSIS]</scope>
</reference>
<gene>
    <name type="primary">gyp51</name>
    <name type="ORF">SPAC26F1.09</name>
</gene>
<sequence>MAFTEANEREVQSSYEKENVKIIREEEAKDQESTDDIAVEDGTGTSPDLNFFSTQNVMQMNFEDEYSEFSNEDDEAEIDNSFADSIPNEPEIPDMQDEYSRDSHSQQSVEEQNNTTNTDEDASVNEFSVAADISDVNTLGKDNSESTEEPVNEVNETATLGNEDVGERSGFPSEGLDNEPESQRDLDETGNLAPEDLKDEVKSVHEFNEPNDLRQQEESYSDDDDTNVNEFEDVNEIENEHQLSVADEDQTSRLVKGKMIFVGKEDFGEEADISNSVFIEQNGPNSDTVSGFKETSSIVNSSSTTEKPGVALDSQNDTSIFNEEQTNSLTETFNDLTLDHLPENVESEPVAGKENETAKNESGASDNDHKANVHVFVLKSSEDAITLNEEKIATQDDPLEAPTPIVASSSTIFLNSNQRNDELSASGSQEPHPKDGTNSTSSLPLDTNNLSNSEPPSHVLDASSETIEVIQTIKKLQNQVPETIKDEVGKKNTAFSPGTSLSTNHVKTKSRSAHNNSTSPFSTAVSSWLNPLRYPSDKSPRVISSYLESVFISKPRSIGDAQKLEILEYLQSQSSTVSNQVFTLLSNFIQNPLFVLDECFDEFRNLILMHNSHTVHTVVWKTISSWTSYDYEMQYSSLSIKNCDSDKAIRKDLDRTFAPEILSHFFSNRQQLEPTDNIAESTANLHRVLRSLAIVLPQVGYTQGMSWIAGALLMHLPAPQAFALLVFLFKNYHLQNIFSSEMRGLSRVLHQFTRLVEDYMPSLAIHFKRQDIKTCSYASEWFLTLFAYKFPLEVVAHLYDILFLYGPGILFNFGLALLSHSQESLLKLNMDRLISYLKEDIFLAFKETQEGENYDTSLFVKTAFSFEIQPDVLDRYGNEYDILLKSEHELDSSLEEMRNRHKSLNEHFIMLSDSMANLQVEHENMSALLLKEKMYLKNQTVEQASLKSEIASLNSQLAKQKSEIEQAFQGDMEAIIAENLEIMVESQSLEDEIFRKEKQLAETKVNLAVLDEDHMMALQKWSQLMNRIKTK</sequence>
<keyword id="KW-0963">Cytoplasm</keyword>
<keyword id="KW-0931">ER-Golgi transport</keyword>
<keyword id="KW-0268">Exocytosis</keyword>
<keyword id="KW-0343">GTPase activation</keyword>
<keyword id="KW-0472">Membrane</keyword>
<keyword id="KW-0653">Protein transport</keyword>
<keyword id="KW-1185">Reference proteome</keyword>
<keyword id="KW-0812">Transmembrane</keyword>
<keyword id="KW-1133">Transmembrane helix</keyword>
<keyword id="KW-0813">Transport</keyword>
<name>GYP51_SCHPO</name>
<accession>Q10496</accession>
<dbReference type="EMBL" id="CU329670">
    <property type="protein sequence ID" value="CAA97366.1"/>
    <property type="molecule type" value="Genomic_DNA"/>
</dbReference>
<dbReference type="PIR" id="T38411">
    <property type="entry name" value="T38411"/>
</dbReference>
<dbReference type="RefSeq" id="NP_594886.1">
    <property type="nucleotide sequence ID" value="NM_001020315.2"/>
</dbReference>
<dbReference type="SMR" id="Q10496"/>
<dbReference type="BioGRID" id="279133">
    <property type="interactions" value="12"/>
</dbReference>
<dbReference type="FunCoup" id="Q10496">
    <property type="interactions" value="20"/>
</dbReference>
<dbReference type="iPTMnet" id="Q10496"/>
<dbReference type="PaxDb" id="4896-SPAC26F1.09.1"/>
<dbReference type="EnsemblFungi" id="SPAC26F1.09.1">
    <property type="protein sequence ID" value="SPAC26F1.09.1:pep"/>
    <property type="gene ID" value="SPAC26F1.09"/>
</dbReference>
<dbReference type="GeneID" id="2542680"/>
<dbReference type="KEGG" id="spo:2542680"/>
<dbReference type="PomBase" id="SPAC26F1.09">
    <property type="gene designation" value="gyp51"/>
</dbReference>
<dbReference type="VEuPathDB" id="FungiDB:SPAC26F1.09"/>
<dbReference type="eggNOG" id="KOG1102">
    <property type="taxonomic scope" value="Eukaryota"/>
</dbReference>
<dbReference type="HOGENOM" id="CLU_302886_0_0_1"/>
<dbReference type="InParanoid" id="Q10496"/>
<dbReference type="OMA" id="HEYSKDE"/>
<dbReference type="PhylomeDB" id="Q10496"/>
<dbReference type="PRO" id="PR:Q10496"/>
<dbReference type="Proteomes" id="UP000002485">
    <property type="component" value="Chromosome I"/>
</dbReference>
<dbReference type="GO" id="GO:0005829">
    <property type="term" value="C:cytosol"/>
    <property type="evidence" value="ECO:0007005"/>
    <property type="project" value="PomBase"/>
</dbReference>
<dbReference type="GO" id="GO:0005798">
    <property type="term" value="C:Golgi-associated vesicle"/>
    <property type="evidence" value="ECO:0000266"/>
    <property type="project" value="PomBase"/>
</dbReference>
<dbReference type="GO" id="GO:0005886">
    <property type="term" value="C:plasma membrane"/>
    <property type="evidence" value="ECO:0000266"/>
    <property type="project" value="PomBase"/>
</dbReference>
<dbReference type="GO" id="GO:0005096">
    <property type="term" value="F:GTPase activator activity"/>
    <property type="evidence" value="ECO:0000318"/>
    <property type="project" value="GO_Central"/>
</dbReference>
<dbReference type="GO" id="GO:0006888">
    <property type="term" value="P:endoplasmic reticulum to Golgi vesicle-mediated transport"/>
    <property type="evidence" value="ECO:0000266"/>
    <property type="project" value="PomBase"/>
</dbReference>
<dbReference type="GO" id="GO:0006887">
    <property type="term" value="P:exocytosis"/>
    <property type="evidence" value="ECO:0000266"/>
    <property type="project" value="PomBase"/>
</dbReference>
<dbReference type="GO" id="GO:0015031">
    <property type="term" value="P:protein transport"/>
    <property type="evidence" value="ECO:0007669"/>
    <property type="project" value="UniProtKB-KW"/>
</dbReference>
<dbReference type="Gene3D" id="1.10.8.270">
    <property type="entry name" value="putative rabgap domain of human tbc1 domain family member 14 like domains"/>
    <property type="match status" value="1"/>
</dbReference>
<dbReference type="Gene3D" id="1.10.472.80">
    <property type="entry name" value="Ypt/Rab-GAP domain of gyp1p, domain 3"/>
    <property type="match status" value="1"/>
</dbReference>
<dbReference type="InterPro" id="IPR000195">
    <property type="entry name" value="Rab-GAP-TBC_dom"/>
</dbReference>
<dbReference type="InterPro" id="IPR035969">
    <property type="entry name" value="Rab-GAP_TBC_sf"/>
</dbReference>
<dbReference type="InterPro" id="IPR050302">
    <property type="entry name" value="Rab_GAP_TBC_domain"/>
</dbReference>
<dbReference type="PANTHER" id="PTHR47219:SF9">
    <property type="entry name" value="GTPASE ACTIVATING PROTEIN AND CENTROSOME-ASSOCIATED, ISOFORM B"/>
    <property type="match status" value="1"/>
</dbReference>
<dbReference type="PANTHER" id="PTHR47219">
    <property type="entry name" value="RAB GTPASE-ACTIVATING PROTEIN 1-LIKE"/>
    <property type="match status" value="1"/>
</dbReference>
<dbReference type="Pfam" id="PF23436">
    <property type="entry name" value="RabGap-TBC_2"/>
    <property type="match status" value="1"/>
</dbReference>
<dbReference type="SMART" id="SM00164">
    <property type="entry name" value="TBC"/>
    <property type="match status" value="1"/>
</dbReference>
<dbReference type="SUPFAM" id="SSF47923">
    <property type="entry name" value="Ypt/Rab-GAP domain of gyp1p"/>
    <property type="match status" value="2"/>
</dbReference>
<dbReference type="PROSITE" id="PS50086">
    <property type="entry name" value="TBC_RABGAP"/>
    <property type="match status" value="1"/>
</dbReference>
<protein>
    <recommendedName>
        <fullName>GTPase activating protein Gyp51</fullName>
    </recommendedName>
</protein>
<organism>
    <name type="scientific">Schizosaccharomyces pombe (strain 972 / ATCC 24843)</name>
    <name type="common">Fission yeast</name>
    <dbReference type="NCBI Taxonomy" id="284812"/>
    <lineage>
        <taxon>Eukaryota</taxon>
        <taxon>Fungi</taxon>
        <taxon>Dikarya</taxon>
        <taxon>Ascomycota</taxon>
        <taxon>Taphrinomycotina</taxon>
        <taxon>Schizosaccharomycetes</taxon>
        <taxon>Schizosaccharomycetales</taxon>
        <taxon>Schizosaccharomycetaceae</taxon>
        <taxon>Schizosaccharomyces</taxon>
    </lineage>
</organism>
<proteinExistence type="inferred from homology"/>
<comment type="function">
    <text evidence="1">GTPase-activating protein involved in ER to Golgi trafficking and polarized exocytosis.</text>
</comment>
<comment type="subcellular location">
    <subcellularLocation>
        <location evidence="6">Membrane</location>
        <topology evidence="6">Single-pass membrane protein</topology>
    </subcellularLocation>
    <subcellularLocation>
        <location evidence="5">Cytoplasm</location>
    </subcellularLocation>
</comment>
<comment type="similarity">
    <text evidence="6">Belongs to the GYP5 family.</text>
</comment>
<evidence type="ECO:0000250" key="1"/>
<evidence type="ECO:0000255" key="2"/>
<evidence type="ECO:0000255" key="3">
    <source>
        <dbReference type="PROSITE-ProRule" id="PRU00163"/>
    </source>
</evidence>
<evidence type="ECO:0000256" key="4">
    <source>
        <dbReference type="SAM" id="MobiDB-lite"/>
    </source>
</evidence>
<evidence type="ECO:0000269" key="5">
    <source>
    </source>
</evidence>
<evidence type="ECO:0000305" key="6"/>